<evidence type="ECO:0000255" key="1">
    <source>
        <dbReference type="HAMAP-Rule" id="MF_02002"/>
    </source>
</evidence>
<protein>
    <recommendedName>
        <fullName evidence="1">Isoleucine--tRNA ligase</fullName>
        <ecNumber evidence="1">6.1.1.5</ecNumber>
    </recommendedName>
    <alternativeName>
        <fullName evidence="1">Isoleucyl-tRNA synthetase</fullName>
        <shortName evidence="1">IleRS</shortName>
    </alternativeName>
</protein>
<reference key="1">
    <citation type="journal article" date="2007" name="PLoS Genet.">
        <title>The complete genome sequence of Yersinia pseudotuberculosis IP31758, the causative agent of Far East scarlet-like fever.</title>
        <authorList>
            <person name="Eppinger M."/>
            <person name="Rosovitz M.J."/>
            <person name="Fricke W.F."/>
            <person name="Rasko D.A."/>
            <person name="Kokorina G."/>
            <person name="Fayolle C."/>
            <person name="Lindler L.E."/>
            <person name="Carniel E."/>
            <person name="Ravel J."/>
        </authorList>
    </citation>
    <scope>NUCLEOTIDE SEQUENCE [LARGE SCALE GENOMIC DNA]</scope>
    <source>
        <strain>IP 31758</strain>
    </source>
</reference>
<comment type="function">
    <text evidence="1">Catalyzes the attachment of isoleucine to tRNA(Ile). As IleRS can inadvertently accommodate and process structurally similar amino acids such as valine, to avoid such errors it has two additional distinct tRNA(Ile)-dependent editing activities. One activity is designated as 'pretransfer' editing and involves the hydrolysis of activated Val-AMP. The other activity is designated 'posttransfer' editing and involves deacylation of mischarged Val-tRNA(Ile).</text>
</comment>
<comment type="catalytic activity">
    <reaction evidence="1">
        <text>tRNA(Ile) + L-isoleucine + ATP = L-isoleucyl-tRNA(Ile) + AMP + diphosphate</text>
        <dbReference type="Rhea" id="RHEA:11060"/>
        <dbReference type="Rhea" id="RHEA-COMP:9666"/>
        <dbReference type="Rhea" id="RHEA-COMP:9695"/>
        <dbReference type="ChEBI" id="CHEBI:30616"/>
        <dbReference type="ChEBI" id="CHEBI:33019"/>
        <dbReference type="ChEBI" id="CHEBI:58045"/>
        <dbReference type="ChEBI" id="CHEBI:78442"/>
        <dbReference type="ChEBI" id="CHEBI:78528"/>
        <dbReference type="ChEBI" id="CHEBI:456215"/>
        <dbReference type="EC" id="6.1.1.5"/>
    </reaction>
</comment>
<comment type="cofactor">
    <cofactor evidence="1">
        <name>Zn(2+)</name>
        <dbReference type="ChEBI" id="CHEBI:29105"/>
    </cofactor>
    <text evidence="1">Binds 1 zinc ion per subunit.</text>
</comment>
<comment type="subunit">
    <text evidence="1">Monomer.</text>
</comment>
<comment type="subcellular location">
    <subcellularLocation>
        <location evidence="1">Cytoplasm</location>
    </subcellularLocation>
</comment>
<comment type="domain">
    <text evidence="1">IleRS has two distinct active sites: one for aminoacylation and one for editing. The misactivated valine is translocated from the active site to the editing site, which sterically excludes the correctly activated isoleucine. The single editing site contains two valyl binding pockets, one specific for each substrate (Val-AMP or Val-tRNA(Ile)).</text>
</comment>
<comment type="similarity">
    <text evidence="1">Belongs to the class-I aminoacyl-tRNA synthetase family. IleS type 1 subfamily.</text>
</comment>
<sequence length="938" mass="104762">MSDYKNTLNLPETGFPMRGDLAKREPDMLKRWYEQDLYGIIRAAKKGKKTFILHDGPPYANGNIHIGHSVNKILKDIIVKSKGMAGYDSPYIPGWDCHGLPIELKVEQLIGKPGEKVSAAEFRTACRKYAAEQVEGQKKDFIRLGVLGDWDHPYLTMDFKTEANIIRALSKIIDNGHLHKGAKPVHWCTDCGSSLAEAEVEYYDKTSQSIDVRFNAVDTATVAAKFGVSVVNGPISLVIWTTTPWTLPANRAISLNAEYLYQLVQVEGECLILAADLVESVMKRAGITQWAVLGSCTGSDLELLRFTHPFMGFDVPAILGEHVTLDAGTGAVHTAPGHGPDDFVIGQKYGLEVANPVGPNGCYLAGTYPTLDGLFVFKANDVVVELLREKGALLHVEKLLHSYPCCWRHKTPIIFRATPQWFISMDQKGLRKQSLQEIKDVQWIPDWGQARIETMVANRPDWCISRQRTWGVPMSLFVHKETEQLHPRSIELMEEVAKRVEQDGIQAWWDLDPAEILGADAADYVKVPDTLDVWFDSGSTHSSVVDARPEFGGHSPDMYLEGSDQHRGWFMSSLMIATAMKGKAPYRQVLTHGFTVDGQGRKMSKSIGNTISPQDVMNKLGGDILRLWVASTDYTGEIAVSDEILKRSADSYRRIRNTARFLLANLNGFDPAQHQVKPEEMVVVDRWAVGRAQAAQAEIMEAYENYDFHLVVQRLMQFCSVEMGSFYLDIIKDRQYTAKGDGIARRSCQTALFHIAEALVRWMAPIMSFTADEIWNHLPGERQQYVFTEEWYDGLFGLAGNESMNDTFWAELLKVRGEVNKVLEQARSDKRIGGSLEAAVTLYAEPELAARLNSLQDELRFVLLTSAAKVAAYADAGNDAQQSELIAGLKITFNKADGEKCPRCWHYTQDVGLVAEHAELCGRCVTNVAGDGEERKFA</sequence>
<proteinExistence type="inferred from homology"/>
<keyword id="KW-0030">Aminoacyl-tRNA synthetase</keyword>
<keyword id="KW-0067">ATP-binding</keyword>
<keyword id="KW-0963">Cytoplasm</keyword>
<keyword id="KW-0436">Ligase</keyword>
<keyword id="KW-0479">Metal-binding</keyword>
<keyword id="KW-0547">Nucleotide-binding</keyword>
<keyword id="KW-0648">Protein biosynthesis</keyword>
<keyword id="KW-0862">Zinc</keyword>
<accession>A7FMD7</accession>
<organism>
    <name type="scientific">Yersinia pseudotuberculosis serotype O:1b (strain IP 31758)</name>
    <dbReference type="NCBI Taxonomy" id="349747"/>
    <lineage>
        <taxon>Bacteria</taxon>
        <taxon>Pseudomonadati</taxon>
        <taxon>Pseudomonadota</taxon>
        <taxon>Gammaproteobacteria</taxon>
        <taxon>Enterobacterales</taxon>
        <taxon>Yersiniaceae</taxon>
        <taxon>Yersinia</taxon>
    </lineage>
</organism>
<name>SYI_YERP3</name>
<gene>
    <name evidence="1" type="primary">ileS</name>
    <name type="ordered locus">YpsIP31758_3460</name>
</gene>
<dbReference type="EC" id="6.1.1.5" evidence="1"/>
<dbReference type="EMBL" id="CP000720">
    <property type="protein sequence ID" value="ABS45948.1"/>
    <property type="molecule type" value="Genomic_DNA"/>
</dbReference>
<dbReference type="RefSeq" id="WP_012105695.1">
    <property type="nucleotide sequence ID" value="NC_009708.1"/>
</dbReference>
<dbReference type="SMR" id="A7FMD7"/>
<dbReference type="KEGG" id="ypi:YpsIP31758_3460"/>
<dbReference type="HOGENOM" id="CLU_001493_7_1_6"/>
<dbReference type="Proteomes" id="UP000002412">
    <property type="component" value="Chromosome"/>
</dbReference>
<dbReference type="GO" id="GO:0005829">
    <property type="term" value="C:cytosol"/>
    <property type="evidence" value="ECO:0007669"/>
    <property type="project" value="TreeGrafter"/>
</dbReference>
<dbReference type="GO" id="GO:0002161">
    <property type="term" value="F:aminoacyl-tRNA deacylase activity"/>
    <property type="evidence" value="ECO:0007669"/>
    <property type="project" value="InterPro"/>
</dbReference>
<dbReference type="GO" id="GO:0005524">
    <property type="term" value="F:ATP binding"/>
    <property type="evidence" value="ECO:0007669"/>
    <property type="project" value="UniProtKB-UniRule"/>
</dbReference>
<dbReference type="GO" id="GO:0004822">
    <property type="term" value="F:isoleucine-tRNA ligase activity"/>
    <property type="evidence" value="ECO:0007669"/>
    <property type="project" value="UniProtKB-UniRule"/>
</dbReference>
<dbReference type="GO" id="GO:0000049">
    <property type="term" value="F:tRNA binding"/>
    <property type="evidence" value="ECO:0007669"/>
    <property type="project" value="InterPro"/>
</dbReference>
<dbReference type="GO" id="GO:0008270">
    <property type="term" value="F:zinc ion binding"/>
    <property type="evidence" value="ECO:0007669"/>
    <property type="project" value="UniProtKB-UniRule"/>
</dbReference>
<dbReference type="GO" id="GO:0006428">
    <property type="term" value="P:isoleucyl-tRNA aminoacylation"/>
    <property type="evidence" value="ECO:0007669"/>
    <property type="project" value="UniProtKB-UniRule"/>
</dbReference>
<dbReference type="CDD" id="cd07960">
    <property type="entry name" value="Anticodon_Ia_Ile_BEm"/>
    <property type="match status" value="1"/>
</dbReference>
<dbReference type="CDD" id="cd00818">
    <property type="entry name" value="IleRS_core"/>
    <property type="match status" value="1"/>
</dbReference>
<dbReference type="FunFam" id="1.10.730.20:FF:000001">
    <property type="entry name" value="Isoleucine--tRNA ligase"/>
    <property type="match status" value="1"/>
</dbReference>
<dbReference type="FunFam" id="3.40.50.620:FF:000042">
    <property type="entry name" value="Isoleucine--tRNA ligase"/>
    <property type="match status" value="1"/>
</dbReference>
<dbReference type="FunFam" id="3.40.50.620:FF:000048">
    <property type="entry name" value="Isoleucine--tRNA ligase"/>
    <property type="match status" value="1"/>
</dbReference>
<dbReference type="FunFam" id="3.90.740.10:FF:000002">
    <property type="entry name" value="Isoleucine--tRNA ligase"/>
    <property type="match status" value="1"/>
</dbReference>
<dbReference type="Gene3D" id="1.10.730.20">
    <property type="match status" value="1"/>
</dbReference>
<dbReference type="Gene3D" id="3.40.50.620">
    <property type="entry name" value="HUPs"/>
    <property type="match status" value="2"/>
</dbReference>
<dbReference type="Gene3D" id="3.90.740.10">
    <property type="entry name" value="Valyl/Leucyl/Isoleucyl-tRNA synthetase, editing domain"/>
    <property type="match status" value="1"/>
</dbReference>
<dbReference type="HAMAP" id="MF_02002">
    <property type="entry name" value="Ile_tRNA_synth_type1"/>
    <property type="match status" value="1"/>
</dbReference>
<dbReference type="InterPro" id="IPR001412">
    <property type="entry name" value="aa-tRNA-synth_I_CS"/>
</dbReference>
<dbReference type="InterPro" id="IPR002300">
    <property type="entry name" value="aa-tRNA-synth_Ia"/>
</dbReference>
<dbReference type="InterPro" id="IPR033708">
    <property type="entry name" value="Anticodon_Ile_BEm"/>
</dbReference>
<dbReference type="InterPro" id="IPR002301">
    <property type="entry name" value="Ile-tRNA-ligase"/>
</dbReference>
<dbReference type="InterPro" id="IPR023585">
    <property type="entry name" value="Ile-tRNA-ligase_type1"/>
</dbReference>
<dbReference type="InterPro" id="IPR050081">
    <property type="entry name" value="Ile-tRNA_ligase"/>
</dbReference>
<dbReference type="InterPro" id="IPR013155">
    <property type="entry name" value="M/V/L/I-tRNA-synth_anticd-bd"/>
</dbReference>
<dbReference type="InterPro" id="IPR014729">
    <property type="entry name" value="Rossmann-like_a/b/a_fold"/>
</dbReference>
<dbReference type="InterPro" id="IPR009080">
    <property type="entry name" value="tRNAsynth_Ia_anticodon-bd"/>
</dbReference>
<dbReference type="InterPro" id="IPR009008">
    <property type="entry name" value="Val/Leu/Ile-tRNA-synth_edit"/>
</dbReference>
<dbReference type="InterPro" id="IPR010663">
    <property type="entry name" value="Znf_FPG/IleRS"/>
</dbReference>
<dbReference type="NCBIfam" id="TIGR00392">
    <property type="entry name" value="ileS"/>
    <property type="match status" value="1"/>
</dbReference>
<dbReference type="PANTHER" id="PTHR42765:SF1">
    <property type="entry name" value="ISOLEUCINE--TRNA LIGASE, MITOCHONDRIAL"/>
    <property type="match status" value="1"/>
</dbReference>
<dbReference type="PANTHER" id="PTHR42765">
    <property type="entry name" value="SOLEUCYL-TRNA SYNTHETASE"/>
    <property type="match status" value="1"/>
</dbReference>
<dbReference type="Pfam" id="PF08264">
    <property type="entry name" value="Anticodon_1"/>
    <property type="match status" value="1"/>
</dbReference>
<dbReference type="Pfam" id="PF00133">
    <property type="entry name" value="tRNA-synt_1"/>
    <property type="match status" value="1"/>
</dbReference>
<dbReference type="Pfam" id="PF06827">
    <property type="entry name" value="zf-FPG_IleRS"/>
    <property type="match status" value="1"/>
</dbReference>
<dbReference type="PRINTS" id="PR00984">
    <property type="entry name" value="TRNASYNTHILE"/>
</dbReference>
<dbReference type="SUPFAM" id="SSF47323">
    <property type="entry name" value="Anticodon-binding domain of a subclass of class I aminoacyl-tRNA synthetases"/>
    <property type="match status" value="1"/>
</dbReference>
<dbReference type="SUPFAM" id="SSF52374">
    <property type="entry name" value="Nucleotidylyl transferase"/>
    <property type="match status" value="1"/>
</dbReference>
<dbReference type="SUPFAM" id="SSF50677">
    <property type="entry name" value="ValRS/IleRS/LeuRS editing domain"/>
    <property type="match status" value="1"/>
</dbReference>
<dbReference type="PROSITE" id="PS00178">
    <property type="entry name" value="AA_TRNA_LIGASE_I"/>
    <property type="match status" value="1"/>
</dbReference>
<feature type="chain" id="PRO_1000070893" description="Isoleucine--tRNA ligase">
    <location>
        <begin position="1"/>
        <end position="938"/>
    </location>
</feature>
<feature type="short sequence motif" description="'HIGH' region">
    <location>
        <begin position="58"/>
        <end position="68"/>
    </location>
</feature>
<feature type="short sequence motif" description="'KMSKS' region">
    <location>
        <begin position="602"/>
        <end position="606"/>
    </location>
</feature>
<feature type="binding site" evidence="1">
    <location>
        <position position="561"/>
    </location>
    <ligand>
        <name>L-isoleucyl-5'-AMP</name>
        <dbReference type="ChEBI" id="CHEBI:178002"/>
    </ligand>
</feature>
<feature type="binding site" evidence="1">
    <location>
        <position position="605"/>
    </location>
    <ligand>
        <name>ATP</name>
        <dbReference type="ChEBI" id="CHEBI:30616"/>
    </ligand>
</feature>
<feature type="binding site" evidence="1">
    <location>
        <position position="901"/>
    </location>
    <ligand>
        <name>Zn(2+)</name>
        <dbReference type="ChEBI" id="CHEBI:29105"/>
    </ligand>
</feature>
<feature type="binding site" evidence="1">
    <location>
        <position position="904"/>
    </location>
    <ligand>
        <name>Zn(2+)</name>
        <dbReference type="ChEBI" id="CHEBI:29105"/>
    </ligand>
</feature>
<feature type="binding site" evidence="1">
    <location>
        <position position="921"/>
    </location>
    <ligand>
        <name>Zn(2+)</name>
        <dbReference type="ChEBI" id="CHEBI:29105"/>
    </ligand>
</feature>
<feature type="binding site" evidence="1">
    <location>
        <position position="924"/>
    </location>
    <ligand>
        <name>Zn(2+)</name>
        <dbReference type="ChEBI" id="CHEBI:29105"/>
    </ligand>
</feature>